<name>MFSA_ASPFU</name>
<gene>
    <name evidence="5" type="primary">mfsA</name>
    <name type="synonym">stl1</name>
    <name type="ORF">AFUA_8G05710</name>
</gene>
<sequence>MWTTTSGLSGRSLRLSITFAAVVGFSLFGYNQGMMAGLLNGDEFVNSFPILKMPDNPTAGEKHYIDVIRGAVTSCYELGCFFGALFSMFCGNRLGRTRLIFMGASILIVGALLTTVCYTGKWEVGQFVIGRVVSGIGNGMNTATIPVWQSECSGAHNRGFLVCFEGAMIAGGTFIAYWVVFGISHAADSVQWRFPVALQIFFALVVATGALMLPDSPSWFVSRGLDNEACEVLGKIKGTSPDSDQVLHDFNLIKTDMESTKSEQSNWKTVFTFGKTQEFQRLLIGCSGQFFQQFTGCNAAIYYSTLLFQENLHMEKYLSLIMGGVFASVYALATIPSFFMIERVGRRKLYLIGFLGQGLSFVITFACLIKETEENSKGAAVGIFLFITFFAFTLLPLPWIYPPEINPLRTRTVGASASTCTNWMCNFAVVMFTPLFAGQSPWGVYLFFALFNFVGLIFGYFFYVETAGRELEEVDIIYAKAHVEGKMPFRVAHDLPKLSFEEIVQQSRELGLDTNDHVMLEKKELGLSSDSAQETEEVYEKQ</sequence>
<proteinExistence type="evidence at transcript level"/>
<feature type="chain" id="PRO_0000445110" description="Major facilitator superfamily transporter mfsA">
    <location>
        <begin position="1"/>
        <end position="542"/>
    </location>
</feature>
<feature type="transmembrane region" description="Helical" evidence="1">
    <location>
        <begin position="19"/>
        <end position="39"/>
    </location>
</feature>
<feature type="transmembrane region" description="Helical" evidence="1">
    <location>
        <begin position="70"/>
        <end position="90"/>
    </location>
</feature>
<feature type="transmembrane region" description="Helical" evidence="1">
    <location>
        <begin position="99"/>
        <end position="119"/>
    </location>
</feature>
<feature type="transmembrane region" description="Helical" evidence="1">
    <location>
        <begin position="127"/>
        <end position="149"/>
    </location>
</feature>
<feature type="transmembrane region" description="Helical" evidence="1">
    <location>
        <begin position="160"/>
        <end position="180"/>
    </location>
</feature>
<feature type="transmembrane region" description="Helical" evidence="1">
    <location>
        <begin position="194"/>
        <end position="214"/>
    </location>
</feature>
<feature type="transmembrane region" description="Helical" evidence="1">
    <location>
        <begin position="321"/>
        <end position="341"/>
    </location>
</feature>
<feature type="transmembrane region" description="Helical" evidence="1">
    <location>
        <begin position="349"/>
        <end position="369"/>
    </location>
</feature>
<feature type="transmembrane region" description="Helical" evidence="1">
    <location>
        <begin position="380"/>
        <end position="400"/>
    </location>
</feature>
<feature type="transmembrane region" description="Helical" evidence="1">
    <location>
        <begin position="413"/>
        <end position="432"/>
    </location>
</feature>
<feature type="transmembrane region" description="Helical" evidence="1">
    <location>
        <begin position="444"/>
        <end position="464"/>
    </location>
</feature>
<evidence type="ECO:0000255" key="1"/>
<evidence type="ECO:0000269" key="2">
    <source>
    </source>
</evidence>
<evidence type="ECO:0000269" key="3">
    <source>
    </source>
</evidence>
<evidence type="ECO:0000269" key="4">
    <source>
    </source>
</evidence>
<evidence type="ECO:0000303" key="5">
    <source>
    </source>
</evidence>
<evidence type="ECO:0000305" key="6"/>
<evidence type="ECO:0000305" key="7">
    <source>
    </source>
</evidence>
<accession>Q4WC50</accession>
<reference key="1">
    <citation type="journal article" date="2005" name="Nature">
        <title>Genomic sequence of the pathogenic and allergenic filamentous fungus Aspergillus fumigatus.</title>
        <authorList>
            <person name="Nierman W.C."/>
            <person name="Pain A."/>
            <person name="Anderson M.J."/>
            <person name="Wortman J.R."/>
            <person name="Kim H.S."/>
            <person name="Arroyo J."/>
            <person name="Berriman M."/>
            <person name="Abe K."/>
            <person name="Archer D.B."/>
            <person name="Bermejo C."/>
            <person name="Bennett J.W."/>
            <person name="Bowyer P."/>
            <person name="Chen D."/>
            <person name="Collins M."/>
            <person name="Coulsen R."/>
            <person name="Davies R."/>
            <person name="Dyer P.S."/>
            <person name="Farman M.L."/>
            <person name="Fedorova N."/>
            <person name="Fedorova N.D."/>
            <person name="Feldblyum T.V."/>
            <person name="Fischer R."/>
            <person name="Fosker N."/>
            <person name="Fraser A."/>
            <person name="Garcia J.L."/>
            <person name="Garcia M.J."/>
            <person name="Goble A."/>
            <person name="Goldman G.H."/>
            <person name="Gomi K."/>
            <person name="Griffith-Jones S."/>
            <person name="Gwilliam R."/>
            <person name="Haas B.J."/>
            <person name="Haas H."/>
            <person name="Harris D.E."/>
            <person name="Horiuchi H."/>
            <person name="Huang J."/>
            <person name="Humphray S."/>
            <person name="Jimenez J."/>
            <person name="Keller N."/>
            <person name="Khouri H."/>
            <person name="Kitamoto K."/>
            <person name="Kobayashi T."/>
            <person name="Konzack S."/>
            <person name="Kulkarni R."/>
            <person name="Kumagai T."/>
            <person name="Lafton A."/>
            <person name="Latge J.-P."/>
            <person name="Li W."/>
            <person name="Lord A."/>
            <person name="Lu C."/>
            <person name="Majoros W.H."/>
            <person name="May G.S."/>
            <person name="Miller B.L."/>
            <person name="Mohamoud Y."/>
            <person name="Molina M."/>
            <person name="Monod M."/>
            <person name="Mouyna I."/>
            <person name="Mulligan S."/>
            <person name="Murphy L.D."/>
            <person name="O'Neil S."/>
            <person name="Paulsen I."/>
            <person name="Penalva M.A."/>
            <person name="Pertea M."/>
            <person name="Price C."/>
            <person name="Pritchard B.L."/>
            <person name="Quail M.A."/>
            <person name="Rabbinowitsch E."/>
            <person name="Rawlins N."/>
            <person name="Rajandream M.A."/>
            <person name="Reichard U."/>
            <person name="Renauld H."/>
            <person name="Robson G.D."/>
            <person name="Rodriguez de Cordoba S."/>
            <person name="Rodriguez-Pena J.M."/>
            <person name="Ronning C.M."/>
            <person name="Rutter S."/>
            <person name="Salzberg S.L."/>
            <person name="Sanchez M."/>
            <person name="Sanchez-Ferrero J.C."/>
            <person name="Saunders D."/>
            <person name="Seeger K."/>
            <person name="Squares R."/>
            <person name="Squares S."/>
            <person name="Takeuchi M."/>
            <person name="Tekaia F."/>
            <person name="Turner G."/>
            <person name="Vazquez de Aldana C.R."/>
            <person name="Weidman J."/>
            <person name="White O."/>
            <person name="Woodward J.R."/>
            <person name="Yu J.-H."/>
            <person name="Fraser C.M."/>
            <person name="Galagan J.E."/>
            <person name="Asai K."/>
            <person name="Machida M."/>
            <person name="Hall N."/>
            <person name="Barrell B.G."/>
            <person name="Denning D.W."/>
        </authorList>
    </citation>
    <scope>NUCLEOTIDE SEQUENCE [LARGE SCALE GENOMIC DNA]</scope>
    <source>
        <strain>ATCC MYA-4609 / CBS 101355 / FGSC A1100 / Af293</strain>
    </source>
</reference>
<reference key="2">
    <citation type="journal article" date="2006" name="Curr. Genet.">
        <title>Transcriptome analysis of Aspergillus fumigatus exposed to voriconazole.</title>
        <authorList>
            <person name="da Silva Ferreira M.E."/>
            <person name="Malavazi I."/>
            <person name="Savoldi M."/>
            <person name="Brakhage A.A."/>
            <person name="Goldman M.H."/>
            <person name="Kim H.S."/>
            <person name="Nierman W.C."/>
            <person name="Goldman G.H."/>
        </authorList>
    </citation>
    <scope>IDENTIFICATION</scope>
    <scope>FUNCTION</scope>
    <scope>INDUCTION</scope>
</reference>
<reference key="3">
    <citation type="journal article" date="2008" name="PLoS ONE">
        <title>Genes differentially expressed in conidia and hyphae of Aspergillus fumigatus upon exposure to human neutrophils.</title>
        <authorList>
            <person name="Sugui J.A."/>
            <person name="Kim H.S."/>
            <person name="Zarember K.A."/>
            <person name="Chang Y.C."/>
            <person name="Gallin J.I."/>
            <person name="Nierman W.C."/>
            <person name="Kwon-Chung K.J."/>
        </authorList>
    </citation>
    <scope>INDUCTION</scope>
</reference>
<reference key="4">
    <citation type="journal article" date="2011" name="PLoS ONE">
        <title>The temporal dynamics of differential gene expression in Aspergillus fumigatus interacting with human immature dendritic cells in vitro.</title>
        <authorList>
            <person name="Morton C.O."/>
            <person name="Varga J.J."/>
            <person name="Hornbach A."/>
            <person name="Mezger M."/>
            <person name="Sennefelder H."/>
            <person name="Kneitz S."/>
            <person name="Kurzai O."/>
            <person name="Krappmann S."/>
            <person name="Einsele H."/>
            <person name="Nierman W.C."/>
            <person name="Rogers T.R."/>
            <person name="Loeffler J."/>
        </authorList>
    </citation>
    <scope>INDUCTION</scope>
</reference>
<comment type="function">
    <text evidence="7">Major facilitator superfamily transporter that may be involved in A.fumigatus adaptation to azoles such as vorizonazole.</text>
</comment>
<comment type="subcellular location">
    <subcellularLocation>
        <location evidence="1">Membrane</location>
        <topology>Multi-pass membrane protein</topology>
    </subcellularLocation>
</comment>
<comment type="induction">
    <text evidence="2 3 4">Expression is induced upon voriconazole treatment (PubMed:16622700). Expression is up-regulated by exposure to human monocyte-derived immature dendritic cells (PubMed:21264256). Expression is also up-regulated in conidia exposed to human neutrophils (PubMed:18648542).</text>
</comment>
<comment type="similarity">
    <text evidence="6">Belongs to the major facilitator superfamily. Sugar transporter (TC 2.A.1.1) family.</text>
</comment>
<dbReference type="EMBL" id="AAHF01000013">
    <property type="protein sequence ID" value="EAL85334.1"/>
    <property type="molecule type" value="Genomic_DNA"/>
</dbReference>
<dbReference type="RefSeq" id="XP_747372.1">
    <property type="nucleotide sequence ID" value="XM_742279.1"/>
</dbReference>
<dbReference type="SMR" id="Q4WC50"/>
<dbReference type="FunCoup" id="Q4WC50">
    <property type="interactions" value="19"/>
</dbReference>
<dbReference type="STRING" id="330879.Q4WC50"/>
<dbReference type="EnsemblFungi" id="EAL85334">
    <property type="protein sequence ID" value="EAL85334"/>
    <property type="gene ID" value="AFUA_8G05710"/>
</dbReference>
<dbReference type="GeneID" id="3504696"/>
<dbReference type="KEGG" id="afm:AFUA_8G05710"/>
<dbReference type="VEuPathDB" id="FungiDB:Afu8g05710"/>
<dbReference type="eggNOG" id="KOG0254">
    <property type="taxonomic scope" value="Eukaryota"/>
</dbReference>
<dbReference type="HOGENOM" id="CLU_001265_30_3_1"/>
<dbReference type="InParanoid" id="Q4WC50"/>
<dbReference type="OMA" id="GKWEVGQ"/>
<dbReference type="OrthoDB" id="6133115at2759"/>
<dbReference type="Proteomes" id="UP000002530">
    <property type="component" value="Chromosome 8"/>
</dbReference>
<dbReference type="GO" id="GO:0016020">
    <property type="term" value="C:membrane"/>
    <property type="evidence" value="ECO:0000318"/>
    <property type="project" value="GO_Central"/>
</dbReference>
<dbReference type="GO" id="GO:0005351">
    <property type="term" value="F:carbohydrate:proton symporter activity"/>
    <property type="evidence" value="ECO:0000318"/>
    <property type="project" value="GO_Central"/>
</dbReference>
<dbReference type="GO" id="GO:0015793">
    <property type="term" value="P:glycerol transmembrane transport"/>
    <property type="evidence" value="ECO:0000318"/>
    <property type="project" value="GO_Central"/>
</dbReference>
<dbReference type="FunFam" id="1.20.1250.20:FF:000061">
    <property type="entry name" value="MFS sugar transporter"/>
    <property type="match status" value="1"/>
</dbReference>
<dbReference type="Gene3D" id="1.20.1250.20">
    <property type="entry name" value="MFS general substrate transporter like domains"/>
    <property type="match status" value="1"/>
</dbReference>
<dbReference type="InterPro" id="IPR020846">
    <property type="entry name" value="MFS_dom"/>
</dbReference>
<dbReference type="InterPro" id="IPR005828">
    <property type="entry name" value="MFS_sugar_transport-like"/>
</dbReference>
<dbReference type="InterPro" id="IPR050360">
    <property type="entry name" value="MFS_Sugar_Transporters"/>
</dbReference>
<dbReference type="InterPro" id="IPR036259">
    <property type="entry name" value="MFS_trans_sf"/>
</dbReference>
<dbReference type="InterPro" id="IPR003663">
    <property type="entry name" value="Sugar/inositol_transpt"/>
</dbReference>
<dbReference type="InterPro" id="IPR005829">
    <property type="entry name" value="Sugar_transporter_CS"/>
</dbReference>
<dbReference type="NCBIfam" id="TIGR00879">
    <property type="entry name" value="SP"/>
    <property type="match status" value="1"/>
</dbReference>
<dbReference type="PANTHER" id="PTHR48022">
    <property type="entry name" value="PLASTIDIC GLUCOSE TRANSPORTER 4"/>
    <property type="match status" value="1"/>
</dbReference>
<dbReference type="PANTHER" id="PTHR48022:SF55">
    <property type="entry name" value="SUGAR TRANSPORTER STL1"/>
    <property type="match status" value="1"/>
</dbReference>
<dbReference type="Pfam" id="PF00083">
    <property type="entry name" value="Sugar_tr"/>
    <property type="match status" value="1"/>
</dbReference>
<dbReference type="PRINTS" id="PR00171">
    <property type="entry name" value="SUGRTRNSPORT"/>
</dbReference>
<dbReference type="SUPFAM" id="SSF103473">
    <property type="entry name" value="MFS general substrate transporter"/>
    <property type="match status" value="1"/>
</dbReference>
<dbReference type="PROSITE" id="PS50850">
    <property type="entry name" value="MFS"/>
    <property type="match status" value="1"/>
</dbReference>
<dbReference type="PROSITE" id="PS00216">
    <property type="entry name" value="SUGAR_TRANSPORT_1"/>
    <property type="match status" value="1"/>
</dbReference>
<organism>
    <name type="scientific">Aspergillus fumigatus (strain ATCC MYA-4609 / CBS 101355 / FGSC A1100 / Af293)</name>
    <name type="common">Neosartorya fumigata</name>
    <dbReference type="NCBI Taxonomy" id="330879"/>
    <lineage>
        <taxon>Eukaryota</taxon>
        <taxon>Fungi</taxon>
        <taxon>Dikarya</taxon>
        <taxon>Ascomycota</taxon>
        <taxon>Pezizomycotina</taxon>
        <taxon>Eurotiomycetes</taxon>
        <taxon>Eurotiomycetidae</taxon>
        <taxon>Eurotiales</taxon>
        <taxon>Aspergillaceae</taxon>
        <taxon>Aspergillus</taxon>
        <taxon>Aspergillus subgen. Fumigati</taxon>
    </lineage>
</organism>
<keyword id="KW-0472">Membrane</keyword>
<keyword id="KW-1185">Reference proteome</keyword>
<keyword id="KW-0812">Transmembrane</keyword>
<keyword id="KW-1133">Transmembrane helix</keyword>
<keyword id="KW-0813">Transport</keyword>
<protein>
    <recommendedName>
        <fullName evidence="5">Major facilitator superfamily transporter mfsA</fullName>
    </recommendedName>
</protein>